<organism>
    <name type="scientific">Synechococcus sp. (strain CC9605)</name>
    <dbReference type="NCBI Taxonomy" id="110662"/>
    <lineage>
        <taxon>Bacteria</taxon>
        <taxon>Bacillati</taxon>
        <taxon>Cyanobacteriota</taxon>
        <taxon>Cyanophyceae</taxon>
        <taxon>Synechococcales</taxon>
        <taxon>Synechococcaceae</taxon>
        <taxon>Synechococcus</taxon>
    </lineage>
</organism>
<comment type="function">
    <text evidence="1">Presumably involved in the processing and regular turnover of intracellular proteins. Catalyzes the removal of unsubstituted N-terminal amino acids from various peptides.</text>
</comment>
<comment type="catalytic activity">
    <reaction evidence="1">
        <text>Release of an N-terminal amino acid, Xaa-|-Yaa-, in which Xaa is preferably Leu, but may be other amino acids including Pro although not Arg or Lys, and Yaa may be Pro. Amino acid amides and methyl esters are also readily hydrolyzed, but rates on arylamides are exceedingly low.</text>
        <dbReference type="EC" id="3.4.11.1"/>
    </reaction>
</comment>
<comment type="catalytic activity">
    <reaction evidence="1">
        <text>Release of an N-terminal amino acid, preferentially leucine, but not glutamic or aspartic acids.</text>
        <dbReference type="EC" id="3.4.11.10"/>
    </reaction>
</comment>
<comment type="cofactor">
    <cofactor evidence="1">
        <name>Mn(2+)</name>
        <dbReference type="ChEBI" id="CHEBI:29035"/>
    </cofactor>
    <text evidence="1">Binds 2 manganese ions per subunit.</text>
</comment>
<comment type="subcellular location">
    <subcellularLocation>
        <location evidence="1">Cytoplasm</location>
    </subcellularLocation>
</comment>
<comment type="similarity">
    <text evidence="1">Belongs to the peptidase M17 family.</text>
</comment>
<sequence>MRFSLSSADLQEWNGDVLAVGLPQGDVDATATALEQRFAGITDALKQQEFKGKPGDQLVITPLGGGPQRLVVLGLGESDAIDTERLRGAAARAAKAAIGCEGSLGLQLPCAGSDAQEAARICAEAVRLCLYKDQRFRKEPDPRRIPEALELIDLSPAAESGFAAVNATCAGVELARELVAAPPNVVTPAALADTAAGIAKDHGLELKVLERSDCEAKGMGAFLAVSQGSDLPPKFIHLIYRPEGEVKRRVALVGKGLTFDSGGYNLKVGAAQIDMMKFDMGGSAAVLGAMRSIAELKPAGVEVHMVVASCENMVNGSAVHPGDIVMAANGMTIEINNTDAEGRLTLADALLYACEQKPDAVVDLATLTGACVIALGDEMAGLWSNNDDLAEALDAAAQTGGEGLWRMPLRQSYKDGLKSLLADMKNTGPRPGGSITAALFLKEFVAKDTAWAHIDIAGPVWSDKGKGVNPAGATGYGVRTLVNWVLAQS</sequence>
<name>AMPA_SYNSC</name>
<proteinExistence type="inferred from homology"/>
<keyword id="KW-0031">Aminopeptidase</keyword>
<keyword id="KW-0963">Cytoplasm</keyword>
<keyword id="KW-0378">Hydrolase</keyword>
<keyword id="KW-0464">Manganese</keyword>
<keyword id="KW-0479">Metal-binding</keyword>
<keyword id="KW-0645">Protease</keyword>
<evidence type="ECO:0000255" key="1">
    <source>
        <dbReference type="HAMAP-Rule" id="MF_00181"/>
    </source>
</evidence>
<protein>
    <recommendedName>
        <fullName evidence="1">Probable cytosol aminopeptidase</fullName>
        <ecNumber evidence="1">3.4.11.1</ecNumber>
    </recommendedName>
    <alternativeName>
        <fullName evidence="1">Leucine aminopeptidase</fullName>
        <shortName evidence="1">LAP</shortName>
        <ecNumber evidence="1">3.4.11.10</ecNumber>
    </alternativeName>
    <alternativeName>
        <fullName evidence="1">Leucyl aminopeptidase</fullName>
    </alternativeName>
</protein>
<accession>Q3AHT4</accession>
<gene>
    <name evidence="1" type="primary">pepA</name>
    <name type="ordered locus">Syncc9605_2108</name>
</gene>
<reference key="1">
    <citation type="submission" date="2005-07" db="EMBL/GenBank/DDBJ databases">
        <title>Complete sequence of Synechococcus sp. CC9605.</title>
        <authorList>
            <consortium name="US DOE Joint Genome Institute"/>
            <person name="Copeland A."/>
            <person name="Lucas S."/>
            <person name="Lapidus A."/>
            <person name="Barry K."/>
            <person name="Detter J.C."/>
            <person name="Glavina T."/>
            <person name="Hammon N."/>
            <person name="Israni S."/>
            <person name="Pitluck S."/>
            <person name="Schmutz J."/>
            <person name="Martinez M."/>
            <person name="Larimer F."/>
            <person name="Land M."/>
            <person name="Kyrpides N."/>
            <person name="Ivanova N."/>
            <person name="Richardson P."/>
        </authorList>
    </citation>
    <scope>NUCLEOTIDE SEQUENCE [LARGE SCALE GENOMIC DNA]</scope>
    <source>
        <strain>CC9605</strain>
    </source>
</reference>
<feature type="chain" id="PRO_1000019995" description="Probable cytosol aminopeptidase">
    <location>
        <begin position="1"/>
        <end position="489"/>
    </location>
</feature>
<feature type="active site" evidence="1">
    <location>
        <position position="267"/>
    </location>
</feature>
<feature type="active site" evidence="1">
    <location>
        <position position="343"/>
    </location>
</feature>
<feature type="binding site" evidence="1">
    <location>
        <position position="255"/>
    </location>
    <ligand>
        <name>Mn(2+)</name>
        <dbReference type="ChEBI" id="CHEBI:29035"/>
        <label>2</label>
    </ligand>
</feature>
<feature type="binding site" evidence="1">
    <location>
        <position position="260"/>
    </location>
    <ligand>
        <name>Mn(2+)</name>
        <dbReference type="ChEBI" id="CHEBI:29035"/>
        <label>1</label>
    </ligand>
</feature>
<feature type="binding site" evidence="1">
    <location>
        <position position="260"/>
    </location>
    <ligand>
        <name>Mn(2+)</name>
        <dbReference type="ChEBI" id="CHEBI:29035"/>
        <label>2</label>
    </ligand>
</feature>
<feature type="binding site" evidence="1">
    <location>
        <position position="279"/>
    </location>
    <ligand>
        <name>Mn(2+)</name>
        <dbReference type="ChEBI" id="CHEBI:29035"/>
        <label>2</label>
    </ligand>
</feature>
<feature type="binding site" evidence="1">
    <location>
        <position position="339"/>
    </location>
    <ligand>
        <name>Mn(2+)</name>
        <dbReference type="ChEBI" id="CHEBI:29035"/>
        <label>1</label>
    </ligand>
</feature>
<feature type="binding site" evidence="1">
    <location>
        <position position="341"/>
    </location>
    <ligand>
        <name>Mn(2+)</name>
        <dbReference type="ChEBI" id="CHEBI:29035"/>
        <label>1</label>
    </ligand>
</feature>
<feature type="binding site" evidence="1">
    <location>
        <position position="341"/>
    </location>
    <ligand>
        <name>Mn(2+)</name>
        <dbReference type="ChEBI" id="CHEBI:29035"/>
        <label>2</label>
    </ligand>
</feature>
<dbReference type="EC" id="3.4.11.1" evidence="1"/>
<dbReference type="EC" id="3.4.11.10" evidence="1"/>
<dbReference type="EMBL" id="CP000110">
    <property type="protein sequence ID" value="ABB35848.1"/>
    <property type="molecule type" value="Genomic_DNA"/>
</dbReference>
<dbReference type="RefSeq" id="WP_011365056.1">
    <property type="nucleotide sequence ID" value="NC_007516.1"/>
</dbReference>
<dbReference type="SMR" id="Q3AHT4"/>
<dbReference type="STRING" id="110662.Syncc9605_2108"/>
<dbReference type="MEROPS" id="M17.A03"/>
<dbReference type="KEGG" id="syd:Syncc9605_2108"/>
<dbReference type="eggNOG" id="COG0260">
    <property type="taxonomic scope" value="Bacteria"/>
</dbReference>
<dbReference type="HOGENOM" id="CLU_013734_5_1_3"/>
<dbReference type="OrthoDB" id="9809354at2"/>
<dbReference type="GO" id="GO:0005737">
    <property type="term" value="C:cytoplasm"/>
    <property type="evidence" value="ECO:0007669"/>
    <property type="project" value="UniProtKB-SubCell"/>
</dbReference>
<dbReference type="GO" id="GO:0030145">
    <property type="term" value="F:manganese ion binding"/>
    <property type="evidence" value="ECO:0007669"/>
    <property type="project" value="UniProtKB-UniRule"/>
</dbReference>
<dbReference type="GO" id="GO:0070006">
    <property type="term" value="F:metalloaminopeptidase activity"/>
    <property type="evidence" value="ECO:0007669"/>
    <property type="project" value="InterPro"/>
</dbReference>
<dbReference type="GO" id="GO:0006508">
    <property type="term" value="P:proteolysis"/>
    <property type="evidence" value="ECO:0007669"/>
    <property type="project" value="UniProtKB-KW"/>
</dbReference>
<dbReference type="CDD" id="cd00433">
    <property type="entry name" value="Peptidase_M17"/>
    <property type="match status" value="1"/>
</dbReference>
<dbReference type="Gene3D" id="3.40.220.10">
    <property type="entry name" value="Leucine Aminopeptidase, subunit E, domain 1"/>
    <property type="match status" value="1"/>
</dbReference>
<dbReference type="Gene3D" id="3.40.630.10">
    <property type="entry name" value="Zn peptidases"/>
    <property type="match status" value="1"/>
</dbReference>
<dbReference type="HAMAP" id="MF_00181">
    <property type="entry name" value="Cytosol_peptidase_M17"/>
    <property type="match status" value="1"/>
</dbReference>
<dbReference type="InterPro" id="IPR011356">
    <property type="entry name" value="Leucine_aapep/pepB"/>
</dbReference>
<dbReference type="InterPro" id="IPR043472">
    <property type="entry name" value="Macro_dom-like"/>
</dbReference>
<dbReference type="InterPro" id="IPR000819">
    <property type="entry name" value="Peptidase_M17_C"/>
</dbReference>
<dbReference type="InterPro" id="IPR023042">
    <property type="entry name" value="Peptidase_M17_leu_NH2_pept"/>
</dbReference>
<dbReference type="InterPro" id="IPR008283">
    <property type="entry name" value="Peptidase_M17_N"/>
</dbReference>
<dbReference type="NCBIfam" id="NF002073">
    <property type="entry name" value="PRK00913.1-2"/>
    <property type="match status" value="1"/>
</dbReference>
<dbReference type="NCBIfam" id="NF002074">
    <property type="entry name" value="PRK00913.1-4"/>
    <property type="match status" value="1"/>
</dbReference>
<dbReference type="NCBIfam" id="NF002076">
    <property type="entry name" value="PRK00913.2-3"/>
    <property type="match status" value="1"/>
</dbReference>
<dbReference type="PANTHER" id="PTHR11963:SF23">
    <property type="entry name" value="CYTOSOL AMINOPEPTIDASE"/>
    <property type="match status" value="1"/>
</dbReference>
<dbReference type="PANTHER" id="PTHR11963">
    <property type="entry name" value="LEUCINE AMINOPEPTIDASE-RELATED"/>
    <property type="match status" value="1"/>
</dbReference>
<dbReference type="Pfam" id="PF00883">
    <property type="entry name" value="Peptidase_M17"/>
    <property type="match status" value="1"/>
</dbReference>
<dbReference type="Pfam" id="PF02789">
    <property type="entry name" value="Peptidase_M17_N"/>
    <property type="match status" value="1"/>
</dbReference>
<dbReference type="PRINTS" id="PR00481">
    <property type="entry name" value="LAMNOPPTDASE"/>
</dbReference>
<dbReference type="SUPFAM" id="SSF52949">
    <property type="entry name" value="Macro domain-like"/>
    <property type="match status" value="1"/>
</dbReference>
<dbReference type="SUPFAM" id="SSF53187">
    <property type="entry name" value="Zn-dependent exopeptidases"/>
    <property type="match status" value="1"/>
</dbReference>
<dbReference type="PROSITE" id="PS00631">
    <property type="entry name" value="CYTOSOL_AP"/>
    <property type="match status" value="1"/>
</dbReference>